<reference key="1">
    <citation type="submission" date="2006-03" db="EMBL/GenBank/DDBJ databases">
        <title>Sequencing of leptin mRNA of Japanese black bear (Ursus thibetanus japonicus).</title>
        <authorList>
            <person name="Nakamura S."/>
            <person name="Okano T."/>
            <person name="Komatsu T."/>
            <person name="Asano M."/>
            <person name="Tsubota T."/>
        </authorList>
    </citation>
    <scope>NUCLEOTIDE SEQUENCE [MRNA]</scope>
    <source>
        <tissue>Adipose tissue</tissue>
    </source>
</reference>
<organism>
    <name type="scientific">Ursus thibetanus</name>
    <name type="common">Asiatic black bear</name>
    <name type="synonym">Selenarctos thibetanus</name>
    <dbReference type="NCBI Taxonomy" id="9642"/>
    <lineage>
        <taxon>Eukaryota</taxon>
        <taxon>Metazoa</taxon>
        <taxon>Chordata</taxon>
        <taxon>Craniata</taxon>
        <taxon>Vertebrata</taxon>
        <taxon>Euteleostomi</taxon>
        <taxon>Mammalia</taxon>
        <taxon>Eutheria</taxon>
        <taxon>Laurasiatheria</taxon>
        <taxon>Carnivora</taxon>
        <taxon>Caniformia</taxon>
        <taxon>Ursidae</taxon>
        <taxon>Ursus</taxon>
    </lineage>
</organism>
<keyword id="KW-1015">Disulfide bond</keyword>
<keyword id="KW-0550">Obesity</keyword>
<keyword id="KW-0964">Secreted</keyword>
<keyword id="KW-0732">Signal</keyword>
<comment type="function">
    <text evidence="2 3 4">Key player in the regulation of energy balance and body weight control. Once released into the circulation, has central and peripheral effects by binding LEPR, found in many tissues, which results in the activation of several major signaling pathways (By similarity). In the hypothalamus, acts as an appetite-regulating factor that induces a decrease in food intake and an increase in energy consumption by inducing anorexinogenic factors and suppressing orexigenic neuropeptides, also regulates bone mass and secretion of hypothalamo-pituitary-adrenal hormones. In the periphery, increases basal metabolism, influences reproductive function, regulates pancreatic beta-cell function and insulin secretion, is pro-angiogenic for endothelial cell and affects innate and adaptive immunity (By similarity). In the arcuate nucleus of the hypothalamus, activates by depolarization POMC neurons inducing FOS and SOCS3 expression to release anorexigenic peptides and inhibits by hyperpolarization NPY neurons inducing SOCS3 with a consequent reduction on release of orexigenic peptides (By similarity). In addition to its known satiety inducing effect, has a modulatory role in nutrient absorption. In the intestine, reduces glucose absorption by enterocytes by activating PKC and leading to a sequential activation of p38, PI3K and ERK signaling pathways which exerts an inhibitory effect on glucose absorption (By similarity). Acts as a growth factor on certain tissues, through the activation of different signaling pathways increases expression of genes involved in cell cycle regulation such as CCND1, via JAK2-STAT3 pathway, or VEGFA, via MAPK1/3 and PI3K-AKT1 pathways (By similarity). May also play an apoptotic role via JAK2-STAT3 pathway and up-regulation of BIRC5 expression. Pro-angiogenic, has mitogenic activity on vascular endothelial cells and plays a role in matrix remodeling by regulating the expression of matrix metalloproteinases (MMPs) and tissue inhibitors of metalloproteinases (TIMPs). In innate immunity, modulates the activity and function of neutrophils by increasing chemotaxis and the secretion of oxygen radicals. Increases phagocytosis by macrophages and enhances secretion of pro-inflammatory mediators. Increases cytotoxic ability of NK cells. Plays a pro-inflammatory role, in synergy with IL1B, by inducing NOS2 which promotes the production of IL6, IL8 and Prostaglandin E2, through a signaling pathway that involves JAK2, PI3K, MAP2K1/MEK1 and MAPK14/p38 (By similarity). In adaptive immunity, promotes the switch of memory T-cells towards T helper-1 cell immune responses (By similarity). Increases CD4(+)CD25(-) T-cell proliferation and reduces autophagy during TCR (T-cell receptor) stimulation, through MTOR signaling pathway activation and BCL2 up-regulation (By similarity).</text>
</comment>
<comment type="subcellular location">
    <subcellularLocation>
        <location evidence="2">Secreted</location>
    </subcellularLocation>
</comment>
<comment type="similarity">
    <text evidence="6">Belongs to the leptin family.</text>
</comment>
<proteinExistence type="evidence at transcript level"/>
<protein>
    <recommendedName>
        <fullName>Leptin</fullName>
    </recommendedName>
    <alternativeName>
        <fullName>Obesity factor</fullName>
    </alternativeName>
</protein>
<accession>Q1XG29</accession>
<evidence type="ECO:0000250" key="1"/>
<evidence type="ECO:0000250" key="2">
    <source>
        <dbReference type="UniProtKB" id="P41159"/>
    </source>
</evidence>
<evidence type="ECO:0000250" key="3">
    <source>
        <dbReference type="UniProtKB" id="P41160"/>
    </source>
</evidence>
<evidence type="ECO:0000250" key="4">
    <source>
        <dbReference type="UniProtKB" id="P50596"/>
    </source>
</evidence>
<evidence type="ECO:0000255" key="5"/>
<evidence type="ECO:0000305" key="6"/>
<feature type="signal peptide" evidence="5">
    <location>
        <begin position="1"/>
        <end position="21"/>
    </location>
</feature>
<feature type="chain" id="PRO_0000235189" description="Leptin">
    <location>
        <begin position="22"/>
        <end position="167"/>
    </location>
</feature>
<feature type="disulfide bond" evidence="1">
    <location>
        <begin position="117"/>
        <end position="167"/>
    </location>
</feature>
<sequence length="167" mass="18698">MRCGPLCRFLWLWPYLSYIEAVPIRKVQDDTKTLIKTIVTRINDISHTQAVSSKQRVAGLDFIPGLHPVLSLSRMDQTLAIYQQILTSLHSRNVVQISNDLENLRDLLHLLASSKSCPLPRARGLESFESLGGVLEASLYSTEVVALSRLQAALQDMLRRLDLSPGC</sequence>
<name>LEP_URSTH</name>
<dbReference type="EMBL" id="AB255164">
    <property type="protein sequence ID" value="BAE92862.1"/>
    <property type="molecule type" value="mRNA"/>
</dbReference>
<dbReference type="SMR" id="Q1XG29"/>
<dbReference type="GO" id="GO:0005615">
    <property type="term" value="C:extracellular space"/>
    <property type="evidence" value="ECO:0007669"/>
    <property type="project" value="TreeGrafter"/>
</dbReference>
<dbReference type="GO" id="GO:0005179">
    <property type="term" value="F:hormone activity"/>
    <property type="evidence" value="ECO:0007669"/>
    <property type="project" value="InterPro"/>
</dbReference>
<dbReference type="GO" id="GO:0051428">
    <property type="term" value="F:peptide hormone receptor binding"/>
    <property type="evidence" value="ECO:0007669"/>
    <property type="project" value="TreeGrafter"/>
</dbReference>
<dbReference type="GO" id="GO:1990051">
    <property type="term" value="P:activation of protein kinase C activity"/>
    <property type="evidence" value="ECO:0000250"/>
    <property type="project" value="UniProtKB"/>
</dbReference>
<dbReference type="GO" id="GO:0098868">
    <property type="term" value="P:bone growth"/>
    <property type="evidence" value="ECO:0000250"/>
    <property type="project" value="UniProtKB"/>
</dbReference>
<dbReference type="GO" id="GO:0044320">
    <property type="term" value="P:cellular response to leptin stimulus"/>
    <property type="evidence" value="ECO:0000250"/>
    <property type="project" value="UniProtKB"/>
</dbReference>
<dbReference type="GO" id="GO:0006112">
    <property type="term" value="P:energy reserve metabolic process"/>
    <property type="evidence" value="ECO:0007669"/>
    <property type="project" value="TreeGrafter"/>
</dbReference>
<dbReference type="GO" id="GO:0050892">
    <property type="term" value="P:intestinal absorption"/>
    <property type="evidence" value="ECO:0000250"/>
    <property type="project" value="UniProtKB"/>
</dbReference>
<dbReference type="GO" id="GO:0033210">
    <property type="term" value="P:leptin-mediated signaling pathway"/>
    <property type="evidence" value="ECO:0000250"/>
    <property type="project" value="UniProtKB"/>
</dbReference>
<dbReference type="GO" id="GO:0006629">
    <property type="term" value="P:lipid metabolic process"/>
    <property type="evidence" value="ECO:0007669"/>
    <property type="project" value="TreeGrafter"/>
</dbReference>
<dbReference type="GO" id="GO:0038108">
    <property type="term" value="P:negative regulation of appetite by leptin-mediated signaling pathway"/>
    <property type="evidence" value="ECO:0000250"/>
    <property type="project" value="UniProtKB"/>
</dbReference>
<dbReference type="GO" id="GO:0010507">
    <property type="term" value="P:negative regulation of autophagy"/>
    <property type="evidence" value="ECO:0000250"/>
    <property type="project" value="UniProtKB"/>
</dbReference>
<dbReference type="GO" id="GO:0046325">
    <property type="term" value="P:negative regulation of D-glucose import"/>
    <property type="evidence" value="ECO:0000250"/>
    <property type="project" value="UniProtKB"/>
</dbReference>
<dbReference type="GO" id="GO:0006909">
    <property type="term" value="P:phagocytosis"/>
    <property type="evidence" value="ECO:0000250"/>
    <property type="project" value="UniProtKB"/>
</dbReference>
<dbReference type="GO" id="GO:0032735">
    <property type="term" value="P:positive regulation of interleukin-12 production"/>
    <property type="evidence" value="ECO:0000250"/>
    <property type="project" value="UniProtKB"/>
</dbReference>
<dbReference type="GO" id="GO:0032755">
    <property type="term" value="P:positive regulation of interleukin-6 production"/>
    <property type="evidence" value="ECO:0000250"/>
    <property type="project" value="UniProtKB"/>
</dbReference>
<dbReference type="GO" id="GO:0032757">
    <property type="term" value="P:positive regulation of interleukin-8 production"/>
    <property type="evidence" value="ECO:0000250"/>
    <property type="project" value="UniProtKB"/>
</dbReference>
<dbReference type="GO" id="GO:0043410">
    <property type="term" value="P:positive regulation of MAPK cascade"/>
    <property type="evidence" value="ECO:0000250"/>
    <property type="project" value="UniProtKB"/>
</dbReference>
<dbReference type="GO" id="GO:1900745">
    <property type="term" value="P:positive regulation of p38MAPK cascade"/>
    <property type="evidence" value="ECO:0000250"/>
    <property type="project" value="UniProtKB"/>
</dbReference>
<dbReference type="GO" id="GO:0051897">
    <property type="term" value="P:positive regulation of phosphatidylinositol 3-kinase/protein kinase B signal transduction"/>
    <property type="evidence" value="ECO:0000250"/>
    <property type="project" value="UniProtKB"/>
</dbReference>
<dbReference type="GO" id="GO:0046427">
    <property type="term" value="P:positive regulation of receptor signaling pathway via JAK-STAT"/>
    <property type="evidence" value="ECO:0000250"/>
    <property type="project" value="UniProtKB"/>
</dbReference>
<dbReference type="GO" id="GO:0042102">
    <property type="term" value="P:positive regulation of T cell proliferation"/>
    <property type="evidence" value="ECO:0000250"/>
    <property type="project" value="UniProtKB"/>
</dbReference>
<dbReference type="GO" id="GO:0032008">
    <property type="term" value="P:positive regulation of TOR signaling"/>
    <property type="evidence" value="ECO:0000250"/>
    <property type="project" value="UniProtKB"/>
</dbReference>
<dbReference type="GO" id="GO:0032760">
    <property type="term" value="P:positive regulation of tumor necrosis factor production"/>
    <property type="evidence" value="ECO:0000250"/>
    <property type="project" value="UniProtKB"/>
</dbReference>
<dbReference type="GO" id="GO:0032310">
    <property type="term" value="P:prostaglandin secretion"/>
    <property type="evidence" value="ECO:0000250"/>
    <property type="project" value="UniProtKB"/>
</dbReference>
<dbReference type="GO" id="GO:0045765">
    <property type="term" value="P:regulation of angiogenesis"/>
    <property type="evidence" value="ECO:0000250"/>
    <property type="project" value="UniProtKB"/>
</dbReference>
<dbReference type="GO" id="GO:0046850">
    <property type="term" value="P:regulation of bone remodeling"/>
    <property type="evidence" value="ECO:0000250"/>
    <property type="project" value="UniProtKB"/>
</dbReference>
<dbReference type="GO" id="GO:0090335">
    <property type="term" value="P:regulation of brown fat cell differentiation"/>
    <property type="evidence" value="ECO:0000250"/>
    <property type="project" value="UniProtKB"/>
</dbReference>
<dbReference type="GO" id="GO:0051726">
    <property type="term" value="P:regulation of cell cycle"/>
    <property type="evidence" value="ECO:0000250"/>
    <property type="project" value="UniProtKB"/>
</dbReference>
<dbReference type="GO" id="GO:1900015">
    <property type="term" value="P:regulation of cytokine production involved in inflammatory response"/>
    <property type="evidence" value="ECO:0000250"/>
    <property type="project" value="UniProtKB"/>
</dbReference>
<dbReference type="GO" id="GO:0001936">
    <property type="term" value="P:regulation of endothelial cell proliferation"/>
    <property type="evidence" value="ECO:0000250"/>
    <property type="project" value="UniProtKB"/>
</dbReference>
<dbReference type="GO" id="GO:0032814">
    <property type="term" value="P:regulation of natural killer cell activation"/>
    <property type="evidence" value="ECO:0000250"/>
    <property type="project" value="UniProtKB"/>
</dbReference>
<dbReference type="GO" id="GO:0042269">
    <property type="term" value="P:regulation of natural killer cell mediated cytotoxicity"/>
    <property type="evidence" value="ECO:0000250"/>
    <property type="project" value="UniProtKB"/>
</dbReference>
<dbReference type="GO" id="GO:0032817">
    <property type="term" value="P:regulation of natural killer cell proliferation"/>
    <property type="evidence" value="ECO:0000250"/>
    <property type="project" value="UniProtKB"/>
</dbReference>
<dbReference type="GO" id="GO:0050999">
    <property type="term" value="P:regulation of nitric-oxide synthase activity"/>
    <property type="evidence" value="ECO:0000250"/>
    <property type="project" value="UniProtKB"/>
</dbReference>
<dbReference type="GO" id="GO:0032868">
    <property type="term" value="P:response to insulin"/>
    <property type="evidence" value="ECO:0000250"/>
    <property type="project" value="AgBase"/>
</dbReference>
<dbReference type="GO" id="GO:0019953">
    <property type="term" value="P:sexual reproduction"/>
    <property type="evidence" value="ECO:0000250"/>
    <property type="project" value="UniProtKB"/>
</dbReference>
<dbReference type="GO" id="GO:0030217">
    <property type="term" value="P:T cell differentiation"/>
    <property type="evidence" value="ECO:0000250"/>
    <property type="project" value="UniProtKB"/>
</dbReference>
<dbReference type="FunFam" id="1.20.1250.10:FF:000008">
    <property type="entry name" value="Leptin"/>
    <property type="match status" value="1"/>
</dbReference>
<dbReference type="Gene3D" id="1.20.1250.10">
    <property type="match status" value="1"/>
</dbReference>
<dbReference type="InterPro" id="IPR009079">
    <property type="entry name" value="4_helix_cytokine-like_core"/>
</dbReference>
<dbReference type="InterPro" id="IPR000065">
    <property type="entry name" value="Leptin"/>
</dbReference>
<dbReference type="PANTHER" id="PTHR11724">
    <property type="entry name" value="LEPTIN"/>
    <property type="match status" value="1"/>
</dbReference>
<dbReference type="PANTHER" id="PTHR11724:SF1">
    <property type="entry name" value="LEPTIN"/>
    <property type="match status" value="1"/>
</dbReference>
<dbReference type="Pfam" id="PF02024">
    <property type="entry name" value="Leptin"/>
    <property type="match status" value="1"/>
</dbReference>
<dbReference type="PIRSF" id="PIRSF001837">
    <property type="entry name" value="Leptin"/>
    <property type="match status" value="1"/>
</dbReference>
<dbReference type="PRINTS" id="PR00495">
    <property type="entry name" value="LEPTIN"/>
</dbReference>
<dbReference type="SUPFAM" id="SSF47266">
    <property type="entry name" value="4-helical cytokines"/>
    <property type="match status" value="1"/>
</dbReference>
<gene>
    <name type="primary">LEP</name>
    <name type="synonym">OB</name>
</gene>